<gene>
    <name evidence="1" type="primary">rsmG</name>
    <name type="ordered locus">Csal_3294</name>
</gene>
<name>RSMG_CHRSD</name>
<sequence>MTPACEARLDAGLAELGLEVDATARERLLALLALLHKWNRAYNLTAVRDPEQMVTRHLLDSASVATAVRGPRLLDVGAGAGLPGLVLAILDPSLEVTMLDGNGKKVRFQRQAVLELGLENVTPVQARVEHFTTRDFDQIVSRAFAQLATFVELTRPLLAEGGEWLAMKGRDAASELAELPPDVTLIERRDLEVPGDAAQRVLLRLRRA</sequence>
<comment type="function">
    <text evidence="1">Specifically methylates the N7 position of guanine in position 527 of 16S rRNA.</text>
</comment>
<comment type="catalytic activity">
    <reaction evidence="1">
        <text>guanosine(527) in 16S rRNA + S-adenosyl-L-methionine = N(7)-methylguanosine(527) in 16S rRNA + S-adenosyl-L-homocysteine</text>
        <dbReference type="Rhea" id="RHEA:42732"/>
        <dbReference type="Rhea" id="RHEA-COMP:10209"/>
        <dbReference type="Rhea" id="RHEA-COMP:10210"/>
        <dbReference type="ChEBI" id="CHEBI:57856"/>
        <dbReference type="ChEBI" id="CHEBI:59789"/>
        <dbReference type="ChEBI" id="CHEBI:74269"/>
        <dbReference type="ChEBI" id="CHEBI:74480"/>
        <dbReference type="EC" id="2.1.1.170"/>
    </reaction>
</comment>
<comment type="subcellular location">
    <subcellularLocation>
        <location evidence="1">Cytoplasm</location>
    </subcellularLocation>
</comment>
<comment type="similarity">
    <text evidence="1">Belongs to the methyltransferase superfamily. RNA methyltransferase RsmG family.</text>
</comment>
<feature type="chain" id="PRO_0000335334" description="Ribosomal RNA small subunit methyltransferase G">
    <location>
        <begin position="1"/>
        <end position="208"/>
    </location>
</feature>
<feature type="binding site" evidence="1">
    <location>
        <position position="77"/>
    </location>
    <ligand>
        <name>S-adenosyl-L-methionine</name>
        <dbReference type="ChEBI" id="CHEBI:59789"/>
    </ligand>
</feature>
<feature type="binding site" evidence="1">
    <location>
        <position position="82"/>
    </location>
    <ligand>
        <name>S-adenosyl-L-methionine</name>
        <dbReference type="ChEBI" id="CHEBI:59789"/>
    </ligand>
</feature>
<feature type="binding site" evidence="1">
    <location>
        <begin position="128"/>
        <end position="129"/>
    </location>
    <ligand>
        <name>S-adenosyl-L-methionine</name>
        <dbReference type="ChEBI" id="CHEBI:59789"/>
    </ligand>
</feature>
<feature type="binding site" evidence="1">
    <location>
        <position position="142"/>
    </location>
    <ligand>
        <name>S-adenosyl-L-methionine</name>
        <dbReference type="ChEBI" id="CHEBI:59789"/>
    </ligand>
</feature>
<organism>
    <name type="scientific">Chromohalobacter salexigens (strain ATCC BAA-138 / DSM 3043 / CIP 106854 / NCIMB 13768 / 1H11)</name>
    <dbReference type="NCBI Taxonomy" id="290398"/>
    <lineage>
        <taxon>Bacteria</taxon>
        <taxon>Pseudomonadati</taxon>
        <taxon>Pseudomonadota</taxon>
        <taxon>Gammaproteobacteria</taxon>
        <taxon>Oceanospirillales</taxon>
        <taxon>Halomonadaceae</taxon>
        <taxon>Chromohalobacter</taxon>
    </lineage>
</organism>
<keyword id="KW-0963">Cytoplasm</keyword>
<keyword id="KW-0489">Methyltransferase</keyword>
<keyword id="KW-1185">Reference proteome</keyword>
<keyword id="KW-0698">rRNA processing</keyword>
<keyword id="KW-0949">S-adenosyl-L-methionine</keyword>
<keyword id="KW-0808">Transferase</keyword>
<protein>
    <recommendedName>
        <fullName evidence="1">Ribosomal RNA small subunit methyltransferase G</fullName>
        <ecNumber evidence="1">2.1.1.170</ecNumber>
    </recommendedName>
    <alternativeName>
        <fullName evidence="1">16S rRNA 7-methylguanosine methyltransferase</fullName>
        <shortName evidence="1">16S rRNA m7G methyltransferase</shortName>
    </alternativeName>
</protein>
<accession>Q1QSC0</accession>
<proteinExistence type="inferred from homology"/>
<reference key="1">
    <citation type="journal article" date="2011" name="Stand. Genomic Sci.">
        <title>Complete genome sequence of the halophilic and highly halotolerant Chromohalobacter salexigens type strain (1H11(T)).</title>
        <authorList>
            <person name="Copeland A."/>
            <person name="O'Connor K."/>
            <person name="Lucas S."/>
            <person name="Lapidus A."/>
            <person name="Berry K.W."/>
            <person name="Detter J.C."/>
            <person name="Del Rio T.G."/>
            <person name="Hammon N."/>
            <person name="Dalin E."/>
            <person name="Tice H."/>
            <person name="Pitluck S."/>
            <person name="Bruce D."/>
            <person name="Goodwin L."/>
            <person name="Han C."/>
            <person name="Tapia R."/>
            <person name="Saunders E."/>
            <person name="Schmutz J."/>
            <person name="Brettin T."/>
            <person name="Larimer F."/>
            <person name="Land M."/>
            <person name="Hauser L."/>
            <person name="Vargas C."/>
            <person name="Nieto J.J."/>
            <person name="Kyrpides N.C."/>
            <person name="Ivanova N."/>
            <person name="Goker M."/>
            <person name="Klenk H.P."/>
            <person name="Csonka L.N."/>
            <person name="Woyke T."/>
        </authorList>
    </citation>
    <scope>NUCLEOTIDE SEQUENCE [LARGE SCALE GENOMIC DNA]</scope>
    <source>
        <strain>ATCC BAA-138 / DSM 3043 / CIP 106854 / NCIMB 13768 / 1H11</strain>
    </source>
</reference>
<dbReference type="EC" id="2.1.1.170" evidence="1"/>
<dbReference type="EMBL" id="CP000285">
    <property type="protein sequence ID" value="ABE60638.1"/>
    <property type="molecule type" value="Genomic_DNA"/>
</dbReference>
<dbReference type="RefSeq" id="WP_011508584.1">
    <property type="nucleotide sequence ID" value="NC_007963.1"/>
</dbReference>
<dbReference type="SMR" id="Q1QSC0"/>
<dbReference type="STRING" id="290398.Csal_3294"/>
<dbReference type="GeneID" id="95335985"/>
<dbReference type="KEGG" id="csa:Csal_3294"/>
<dbReference type="eggNOG" id="COG0357">
    <property type="taxonomic scope" value="Bacteria"/>
</dbReference>
<dbReference type="HOGENOM" id="CLU_065341_2_0_6"/>
<dbReference type="OrthoDB" id="9808773at2"/>
<dbReference type="Proteomes" id="UP000000239">
    <property type="component" value="Chromosome"/>
</dbReference>
<dbReference type="GO" id="GO:0005829">
    <property type="term" value="C:cytosol"/>
    <property type="evidence" value="ECO:0007669"/>
    <property type="project" value="TreeGrafter"/>
</dbReference>
<dbReference type="GO" id="GO:0070043">
    <property type="term" value="F:rRNA (guanine-N7-)-methyltransferase activity"/>
    <property type="evidence" value="ECO:0007669"/>
    <property type="project" value="UniProtKB-UniRule"/>
</dbReference>
<dbReference type="CDD" id="cd02440">
    <property type="entry name" value="AdoMet_MTases"/>
    <property type="match status" value="1"/>
</dbReference>
<dbReference type="Gene3D" id="3.40.50.150">
    <property type="entry name" value="Vaccinia Virus protein VP39"/>
    <property type="match status" value="1"/>
</dbReference>
<dbReference type="HAMAP" id="MF_00074">
    <property type="entry name" value="16SrRNA_methyltr_G"/>
    <property type="match status" value="1"/>
</dbReference>
<dbReference type="InterPro" id="IPR003682">
    <property type="entry name" value="rRNA_ssu_MeTfrase_G"/>
</dbReference>
<dbReference type="InterPro" id="IPR029063">
    <property type="entry name" value="SAM-dependent_MTases_sf"/>
</dbReference>
<dbReference type="NCBIfam" id="TIGR00138">
    <property type="entry name" value="rsmG_gidB"/>
    <property type="match status" value="1"/>
</dbReference>
<dbReference type="PANTHER" id="PTHR31760">
    <property type="entry name" value="S-ADENOSYL-L-METHIONINE-DEPENDENT METHYLTRANSFERASES SUPERFAMILY PROTEIN"/>
    <property type="match status" value="1"/>
</dbReference>
<dbReference type="PANTHER" id="PTHR31760:SF0">
    <property type="entry name" value="S-ADENOSYL-L-METHIONINE-DEPENDENT METHYLTRANSFERASES SUPERFAMILY PROTEIN"/>
    <property type="match status" value="1"/>
</dbReference>
<dbReference type="Pfam" id="PF02527">
    <property type="entry name" value="GidB"/>
    <property type="match status" value="1"/>
</dbReference>
<dbReference type="PIRSF" id="PIRSF003078">
    <property type="entry name" value="GidB"/>
    <property type="match status" value="1"/>
</dbReference>
<dbReference type="SUPFAM" id="SSF53335">
    <property type="entry name" value="S-adenosyl-L-methionine-dependent methyltransferases"/>
    <property type="match status" value="1"/>
</dbReference>
<evidence type="ECO:0000255" key="1">
    <source>
        <dbReference type="HAMAP-Rule" id="MF_00074"/>
    </source>
</evidence>